<reference key="1">
    <citation type="submission" date="2006-09" db="EMBL/GenBank/DDBJ databases">
        <authorList>
            <consortium name="The Klebsiella pneumonia Genome Sequencing Project"/>
            <person name="McClelland M."/>
            <person name="Sanderson E.K."/>
            <person name="Spieth J."/>
            <person name="Clifton W.S."/>
            <person name="Latreille P."/>
            <person name="Sabo A."/>
            <person name="Pepin K."/>
            <person name="Bhonagiri V."/>
            <person name="Porwollik S."/>
            <person name="Ali J."/>
            <person name="Wilson R.K."/>
        </authorList>
    </citation>
    <scope>NUCLEOTIDE SEQUENCE [LARGE SCALE GENOMIC DNA]</scope>
    <source>
        <strain>ATCC 700721 / MGH 78578</strain>
    </source>
</reference>
<name>RS5_KLEP7</name>
<organism>
    <name type="scientific">Klebsiella pneumoniae subsp. pneumoniae (strain ATCC 700721 / MGH 78578)</name>
    <dbReference type="NCBI Taxonomy" id="272620"/>
    <lineage>
        <taxon>Bacteria</taxon>
        <taxon>Pseudomonadati</taxon>
        <taxon>Pseudomonadota</taxon>
        <taxon>Gammaproteobacteria</taxon>
        <taxon>Enterobacterales</taxon>
        <taxon>Enterobacteriaceae</taxon>
        <taxon>Klebsiella/Raoultella group</taxon>
        <taxon>Klebsiella</taxon>
        <taxon>Klebsiella pneumoniae complex</taxon>
    </lineage>
</organism>
<accession>A6TEV5</accession>
<keyword id="KW-0687">Ribonucleoprotein</keyword>
<keyword id="KW-0689">Ribosomal protein</keyword>
<keyword id="KW-0694">RNA-binding</keyword>
<keyword id="KW-0699">rRNA-binding</keyword>
<dbReference type="EMBL" id="CP000647">
    <property type="protein sequence ID" value="ABR79089.1"/>
    <property type="molecule type" value="Genomic_DNA"/>
</dbReference>
<dbReference type="RefSeq" id="WP_002919545.1">
    <property type="nucleotide sequence ID" value="NC_009648.1"/>
</dbReference>
<dbReference type="SMR" id="A6TEV5"/>
<dbReference type="STRING" id="272620.KPN_03702"/>
<dbReference type="jPOST" id="A6TEV5"/>
<dbReference type="PaxDb" id="272620-KPN_03702"/>
<dbReference type="EnsemblBacteria" id="ABR79089">
    <property type="protein sequence ID" value="ABR79089"/>
    <property type="gene ID" value="KPN_03702"/>
</dbReference>
<dbReference type="GeneID" id="93251030"/>
<dbReference type="KEGG" id="kpn:KPN_03702"/>
<dbReference type="HOGENOM" id="CLU_065898_2_2_6"/>
<dbReference type="Proteomes" id="UP000000265">
    <property type="component" value="Chromosome"/>
</dbReference>
<dbReference type="GO" id="GO:0015935">
    <property type="term" value="C:small ribosomal subunit"/>
    <property type="evidence" value="ECO:0007669"/>
    <property type="project" value="InterPro"/>
</dbReference>
<dbReference type="GO" id="GO:0019843">
    <property type="term" value="F:rRNA binding"/>
    <property type="evidence" value="ECO:0007669"/>
    <property type="project" value="UniProtKB-UniRule"/>
</dbReference>
<dbReference type="GO" id="GO:0003735">
    <property type="term" value="F:structural constituent of ribosome"/>
    <property type="evidence" value="ECO:0007669"/>
    <property type="project" value="InterPro"/>
</dbReference>
<dbReference type="GO" id="GO:0006412">
    <property type="term" value="P:translation"/>
    <property type="evidence" value="ECO:0007669"/>
    <property type="project" value="UniProtKB-UniRule"/>
</dbReference>
<dbReference type="FunFam" id="3.30.160.20:FF:000001">
    <property type="entry name" value="30S ribosomal protein S5"/>
    <property type="match status" value="1"/>
</dbReference>
<dbReference type="FunFam" id="3.30.230.10:FF:000002">
    <property type="entry name" value="30S ribosomal protein S5"/>
    <property type="match status" value="1"/>
</dbReference>
<dbReference type="Gene3D" id="3.30.160.20">
    <property type="match status" value="1"/>
</dbReference>
<dbReference type="Gene3D" id="3.30.230.10">
    <property type="match status" value="1"/>
</dbReference>
<dbReference type="HAMAP" id="MF_01307_B">
    <property type="entry name" value="Ribosomal_uS5_B"/>
    <property type="match status" value="1"/>
</dbReference>
<dbReference type="InterPro" id="IPR020568">
    <property type="entry name" value="Ribosomal_Su5_D2-typ_SF"/>
</dbReference>
<dbReference type="InterPro" id="IPR000851">
    <property type="entry name" value="Ribosomal_uS5"/>
</dbReference>
<dbReference type="InterPro" id="IPR005712">
    <property type="entry name" value="Ribosomal_uS5_bac-type"/>
</dbReference>
<dbReference type="InterPro" id="IPR005324">
    <property type="entry name" value="Ribosomal_uS5_C"/>
</dbReference>
<dbReference type="InterPro" id="IPR013810">
    <property type="entry name" value="Ribosomal_uS5_N"/>
</dbReference>
<dbReference type="InterPro" id="IPR018192">
    <property type="entry name" value="Ribosomal_uS5_N_CS"/>
</dbReference>
<dbReference type="InterPro" id="IPR014721">
    <property type="entry name" value="Ribsml_uS5_D2-typ_fold_subgr"/>
</dbReference>
<dbReference type="NCBIfam" id="TIGR01021">
    <property type="entry name" value="rpsE_bact"/>
    <property type="match status" value="1"/>
</dbReference>
<dbReference type="PANTHER" id="PTHR48277">
    <property type="entry name" value="MITOCHONDRIAL RIBOSOMAL PROTEIN S5"/>
    <property type="match status" value="1"/>
</dbReference>
<dbReference type="PANTHER" id="PTHR48277:SF1">
    <property type="entry name" value="MITOCHONDRIAL RIBOSOMAL PROTEIN S5"/>
    <property type="match status" value="1"/>
</dbReference>
<dbReference type="Pfam" id="PF00333">
    <property type="entry name" value="Ribosomal_S5"/>
    <property type="match status" value="1"/>
</dbReference>
<dbReference type="Pfam" id="PF03719">
    <property type="entry name" value="Ribosomal_S5_C"/>
    <property type="match status" value="1"/>
</dbReference>
<dbReference type="SUPFAM" id="SSF54768">
    <property type="entry name" value="dsRNA-binding domain-like"/>
    <property type="match status" value="1"/>
</dbReference>
<dbReference type="SUPFAM" id="SSF54211">
    <property type="entry name" value="Ribosomal protein S5 domain 2-like"/>
    <property type="match status" value="1"/>
</dbReference>
<dbReference type="PROSITE" id="PS00585">
    <property type="entry name" value="RIBOSOMAL_S5"/>
    <property type="match status" value="1"/>
</dbReference>
<dbReference type="PROSITE" id="PS50881">
    <property type="entry name" value="S5_DSRBD"/>
    <property type="match status" value="1"/>
</dbReference>
<proteinExistence type="inferred from homology"/>
<feature type="chain" id="PRO_1000086021" description="Small ribosomal subunit protein uS5">
    <location>
        <begin position="1"/>
        <end position="167"/>
    </location>
</feature>
<feature type="domain" description="S5 DRBM" evidence="1">
    <location>
        <begin position="11"/>
        <end position="74"/>
    </location>
</feature>
<evidence type="ECO:0000255" key="1">
    <source>
        <dbReference type="HAMAP-Rule" id="MF_01307"/>
    </source>
</evidence>
<evidence type="ECO:0000305" key="2"/>
<protein>
    <recommendedName>
        <fullName evidence="1">Small ribosomal subunit protein uS5</fullName>
    </recommendedName>
    <alternativeName>
        <fullName evidence="2">30S ribosomal protein S5</fullName>
    </alternativeName>
</protein>
<comment type="function">
    <text evidence="1">With S4 and S12 plays an important role in translational accuracy.</text>
</comment>
<comment type="function">
    <text evidence="1">Located at the back of the 30S subunit body where it stabilizes the conformation of the head with respect to the body.</text>
</comment>
<comment type="subunit">
    <text evidence="1">Part of the 30S ribosomal subunit. Contacts proteins S4 and S8.</text>
</comment>
<comment type="domain">
    <text>The N-terminal domain interacts with the head of the 30S subunit; the C-terminal domain interacts with the body and contacts protein S4. The interaction surface between S4 and S5 is involved in control of translational fidelity.</text>
</comment>
<comment type="similarity">
    <text evidence="1">Belongs to the universal ribosomal protein uS5 family.</text>
</comment>
<gene>
    <name evidence="1" type="primary">rpsE</name>
    <name type="ordered locus">KPN78578_36650</name>
    <name type="ORF">KPN_03702</name>
</gene>
<sequence>MAHIEKQAGELQEKLIAVNRVSKTVKGGRIFSFTALTVVGDGNGRVGFGYGKAREVPAAIQKAMEKARRNMINVALNHGTLQHPVKGTHTGSRVFMQPASEGTGIIAGGAMRAVLEVAGVRNVLAKAYGSTNPINVVRATIDGLENMKSPDMVAAKRGKSVEEILGK</sequence>